<sequence length="358" mass="40147">MSKSKDPIFFSTGGLDNFISPKMRPLNGTAGEQWEFDGVSDDAKLAFVFGFYRDPNYAILGSGNLRVSVEMAWPNGSRFAQVDYPTDNIIEECDWGTRGIWRSNDFNYTFEITADMKRARVGMHTPQVTGIVSMTSTSQPRYPDGRTYPSENSTSEALPYFHFVEPIPVARAHVDMTILGEKFAWDGLGGMERLWGAFSWFTCLQGMNVIRILAGPYSLSMLSFTSNIKKGREYPSIALFDNGEPVFSSQNTEESDVNDYFSFTKTYDGKVTGTLRDKVTGYELELVSPGRQLHWTFLIDHANLAFEYILGRGTGGSGFSAWVNGGRMGREQFKGIALTEALTFPKKSPLFRPQYSED</sequence>
<gene>
    <name evidence="2" type="primary">phmD</name>
    <name type="ORF">SNOG_00310</name>
</gene>
<name>PHMD_PHANO</name>
<comment type="function">
    <text evidence="1 4">Diels-Alderase; part of the gene cluster that mediates the biosynthesis of the mycotoxins phomacins, leucine-derived cytochalasans with potent actin polymerization-inhibitory activities and monocot-specific antigerminative activities (PubMed:31815421). The first step in the pathway is catalyzed by the hybrid PKS-NRPS phmA, assisted by the enoyl reductase phmE, that are responsible for fusion of the leucine precursor and the polyketide backbone to produce a 2-pyrrolidone intermediate (PubMed:31815421). The polyketide synthase module (PKS) of phmA is responsible for the synthesis of the polyketide backbone and the downstream nonribosomal peptide synthetase (NRPS) amidates the carboxyl end of the polyketide with the leucine precursor (PubMed:31815421). Because phmA lacks a designated enoylreductase (ER) domain, the required activity is provided the enoyl reductase phmE (PubMed:31815421). Reduction by the hydrolyase phmG, followed by dehydration and intra-molecular Diels-Alder cyclization by the Diels-Alderase phmD then yield the required isoindolone-fused macrocycle (Probable). A number of oxidative steps catalyzed by the tailoring cytochrome P450 monooxygenase phmB, the FAD-linked oxidoreductase phmC and the short-chain dehydrogenase/reductase phmF, are further required to afford the final products, phomacin D and phomacin E (PubMed:31815421).</text>
</comment>
<comment type="pathway">
    <text evidence="4">Mycotoxin biosynthesis.</text>
</comment>
<comment type="similarity">
    <text evidence="3">Belongs to the Diels-Alderase family.</text>
</comment>
<feature type="chain" id="PRO_0000449456" description="Diels-Alderase phmD">
    <location>
        <begin position="1"/>
        <end position="358"/>
    </location>
</feature>
<proteinExistence type="inferred from homology"/>
<accession>Q0V6Q4</accession>
<protein>
    <recommendedName>
        <fullName evidence="2">Diels-Alderase phmD</fullName>
        <ecNumber evidence="4">5.5.1.-</ecNumber>
    </recommendedName>
    <alternativeName>
        <fullName evidence="2">Phomacin biosynthesis cluster protein D</fullName>
    </alternativeName>
</protein>
<dbReference type="EC" id="5.5.1.-" evidence="4"/>
<dbReference type="EMBL" id="CH445325">
    <property type="protein sequence ID" value="EAT91805.1"/>
    <property type="molecule type" value="Genomic_DNA"/>
</dbReference>
<dbReference type="RefSeq" id="XP_001791000.1">
    <property type="nucleotide sequence ID" value="XM_001790948.1"/>
</dbReference>
<dbReference type="SMR" id="Q0V6Q4"/>
<dbReference type="GeneID" id="5968076"/>
<dbReference type="KEGG" id="pno:SNOG_00310"/>
<dbReference type="VEuPathDB" id="FungiDB:JI435_003100"/>
<dbReference type="InParanoid" id="Q0V6Q4"/>
<dbReference type="OMA" id="GGHERFW"/>
<dbReference type="Proteomes" id="UP000001055">
    <property type="component" value="Unassembled WGS sequence"/>
</dbReference>
<dbReference type="GO" id="GO:0016853">
    <property type="term" value="F:isomerase activity"/>
    <property type="evidence" value="ECO:0007669"/>
    <property type="project" value="UniProtKB-KW"/>
</dbReference>
<dbReference type="InterPro" id="IPR054499">
    <property type="entry name" value="DA_C"/>
</dbReference>
<dbReference type="Pfam" id="PF22903">
    <property type="entry name" value="DA_C"/>
    <property type="match status" value="1"/>
</dbReference>
<dbReference type="Pfam" id="PF24137">
    <property type="entry name" value="DA_N"/>
    <property type="match status" value="1"/>
</dbReference>
<dbReference type="SUPFAM" id="SSF159245">
    <property type="entry name" value="AttH-like"/>
    <property type="match status" value="1"/>
</dbReference>
<evidence type="ECO:0000269" key="1">
    <source>
    </source>
</evidence>
<evidence type="ECO:0000303" key="2">
    <source>
    </source>
</evidence>
<evidence type="ECO:0000305" key="3"/>
<evidence type="ECO:0000305" key="4">
    <source>
    </source>
</evidence>
<keyword id="KW-0413">Isomerase</keyword>
<keyword id="KW-0843">Virulence</keyword>
<organism>
    <name type="scientific">Phaeosphaeria nodorum (strain SN15 / ATCC MYA-4574 / FGSC 10173)</name>
    <name type="common">Glume blotch fungus</name>
    <name type="synonym">Parastagonospora nodorum</name>
    <dbReference type="NCBI Taxonomy" id="321614"/>
    <lineage>
        <taxon>Eukaryota</taxon>
        <taxon>Fungi</taxon>
        <taxon>Dikarya</taxon>
        <taxon>Ascomycota</taxon>
        <taxon>Pezizomycotina</taxon>
        <taxon>Dothideomycetes</taxon>
        <taxon>Pleosporomycetidae</taxon>
        <taxon>Pleosporales</taxon>
        <taxon>Pleosporineae</taxon>
        <taxon>Phaeosphaeriaceae</taxon>
        <taxon>Parastagonospora</taxon>
    </lineage>
</organism>
<reference key="1">
    <citation type="journal article" date="2007" name="Plant Cell">
        <title>Dothideomycete-plant interactions illuminated by genome sequencing and EST analysis of the wheat pathogen Stagonospora nodorum.</title>
        <authorList>
            <person name="Hane J.K."/>
            <person name="Lowe R.G.T."/>
            <person name="Solomon P.S."/>
            <person name="Tan K.-C."/>
            <person name="Schoch C.L."/>
            <person name="Spatafora J.W."/>
            <person name="Crous P.W."/>
            <person name="Kodira C.D."/>
            <person name="Birren B.W."/>
            <person name="Galagan J.E."/>
            <person name="Torriani S.F.F."/>
            <person name="McDonald B.A."/>
            <person name="Oliver R.P."/>
        </authorList>
    </citation>
    <scope>NUCLEOTIDE SEQUENCE [LARGE SCALE GENOMIC DNA]</scope>
    <source>
        <strain>SN15 / ATCC MYA-4574 / FGSC 10173</strain>
    </source>
</reference>
<reference key="2">
    <citation type="journal article" date="2020" name="ACS Chem. Biol.">
        <title>Genomics-driven discovery of phytotoxic cytochalasans involved in the virulence of the wheat pathogen Parastagonospora nodorum.</title>
        <authorList>
            <person name="Li H."/>
            <person name="Wei H."/>
            <person name="Hu J."/>
            <person name="Lacey E."/>
            <person name="Sobolev A.N."/>
            <person name="Stubbs K.A."/>
            <person name="Solomon P.S."/>
            <person name="Chooi Y.H."/>
        </authorList>
    </citation>
    <scope>FUNCTION</scope>
    <scope>PATHWAY</scope>
</reference>